<dbReference type="EMBL" id="CP000127">
    <property type="protein sequence ID" value="ABA59259.1"/>
    <property type="molecule type" value="Genomic_DNA"/>
</dbReference>
<dbReference type="RefSeq" id="WP_011331068.1">
    <property type="nucleotide sequence ID" value="NC_007484.1"/>
</dbReference>
<dbReference type="SMR" id="Q3J7D7"/>
<dbReference type="FunCoup" id="Q3J7D7">
    <property type="interactions" value="501"/>
</dbReference>
<dbReference type="STRING" id="323261.Noc_2812"/>
<dbReference type="KEGG" id="noc:Noc_2812"/>
<dbReference type="eggNOG" id="COG0576">
    <property type="taxonomic scope" value="Bacteria"/>
</dbReference>
<dbReference type="HOGENOM" id="CLU_057217_6_0_6"/>
<dbReference type="InParanoid" id="Q3J7D7"/>
<dbReference type="Proteomes" id="UP000006838">
    <property type="component" value="Chromosome"/>
</dbReference>
<dbReference type="GO" id="GO:0005829">
    <property type="term" value="C:cytosol"/>
    <property type="evidence" value="ECO:0007669"/>
    <property type="project" value="TreeGrafter"/>
</dbReference>
<dbReference type="GO" id="GO:0000774">
    <property type="term" value="F:adenyl-nucleotide exchange factor activity"/>
    <property type="evidence" value="ECO:0007669"/>
    <property type="project" value="InterPro"/>
</dbReference>
<dbReference type="GO" id="GO:0042803">
    <property type="term" value="F:protein homodimerization activity"/>
    <property type="evidence" value="ECO:0007669"/>
    <property type="project" value="InterPro"/>
</dbReference>
<dbReference type="GO" id="GO:0051087">
    <property type="term" value="F:protein-folding chaperone binding"/>
    <property type="evidence" value="ECO:0007669"/>
    <property type="project" value="InterPro"/>
</dbReference>
<dbReference type="GO" id="GO:0051082">
    <property type="term" value="F:unfolded protein binding"/>
    <property type="evidence" value="ECO:0007669"/>
    <property type="project" value="TreeGrafter"/>
</dbReference>
<dbReference type="GO" id="GO:0006457">
    <property type="term" value="P:protein folding"/>
    <property type="evidence" value="ECO:0007669"/>
    <property type="project" value="InterPro"/>
</dbReference>
<dbReference type="CDD" id="cd00446">
    <property type="entry name" value="GrpE"/>
    <property type="match status" value="1"/>
</dbReference>
<dbReference type="FunFam" id="2.30.22.10:FF:000001">
    <property type="entry name" value="Protein GrpE"/>
    <property type="match status" value="1"/>
</dbReference>
<dbReference type="Gene3D" id="3.90.20.20">
    <property type="match status" value="1"/>
</dbReference>
<dbReference type="Gene3D" id="2.30.22.10">
    <property type="entry name" value="Head domain of nucleotide exchange factor GrpE"/>
    <property type="match status" value="1"/>
</dbReference>
<dbReference type="HAMAP" id="MF_01151">
    <property type="entry name" value="GrpE"/>
    <property type="match status" value="1"/>
</dbReference>
<dbReference type="InterPro" id="IPR000740">
    <property type="entry name" value="GrpE"/>
</dbReference>
<dbReference type="InterPro" id="IPR013805">
    <property type="entry name" value="GrpE_coiled_coil"/>
</dbReference>
<dbReference type="InterPro" id="IPR009012">
    <property type="entry name" value="GrpE_head"/>
</dbReference>
<dbReference type="NCBIfam" id="NF010737">
    <property type="entry name" value="PRK14139.1"/>
    <property type="match status" value="1"/>
</dbReference>
<dbReference type="NCBIfam" id="NF010738">
    <property type="entry name" value="PRK14140.1"/>
    <property type="match status" value="1"/>
</dbReference>
<dbReference type="NCBIfam" id="NF010748">
    <property type="entry name" value="PRK14150.1"/>
    <property type="match status" value="1"/>
</dbReference>
<dbReference type="PANTHER" id="PTHR21237">
    <property type="entry name" value="GRPE PROTEIN"/>
    <property type="match status" value="1"/>
</dbReference>
<dbReference type="PANTHER" id="PTHR21237:SF23">
    <property type="entry name" value="GRPE PROTEIN HOMOLOG, MITOCHONDRIAL"/>
    <property type="match status" value="1"/>
</dbReference>
<dbReference type="Pfam" id="PF01025">
    <property type="entry name" value="GrpE"/>
    <property type="match status" value="1"/>
</dbReference>
<dbReference type="PRINTS" id="PR00773">
    <property type="entry name" value="GRPEPROTEIN"/>
</dbReference>
<dbReference type="SUPFAM" id="SSF58014">
    <property type="entry name" value="Coiled-coil domain of nucleotide exchange factor GrpE"/>
    <property type="match status" value="1"/>
</dbReference>
<dbReference type="SUPFAM" id="SSF51064">
    <property type="entry name" value="Head domain of nucleotide exchange factor GrpE"/>
    <property type="match status" value="1"/>
</dbReference>
<dbReference type="PROSITE" id="PS01071">
    <property type="entry name" value="GRPE"/>
    <property type="match status" value="1"/>
</dbReference>
<sequence>MANEERTIPETNVASERPEDPVESQTRAEGGEQIQEAAPETAELEAVQQLLEDARSKADEHWNELLRARAELENQRRRHERELEKGRKYALEKFAQDLLPVKDSLEMGLAAAQAEDANVTALREGTELILKMFNEVAARFGIETIDPQGEAFNPDFHQAISTQESSEAAPDTVLTVVRKGYALNGRLLRPAMVVVSKPGEQTTAGVDTQA</sequence>
<comment type="function">
    <text evidence="1">Participates actively in the response to hyperosmotic and heat shock by preventing the aggregation of stress-denatured proteins, in association with DnaK and GrpE. It is the nucleotide exchange factor for DnaK and may function as a thermosensor. Unfolded proteins bind initially to DnaJ; upon interaction with the DnaJ-bound protein, DnaK hydrolyzes its bound ATP, resulting in the formation of a stable complex. GrpE releases ADP from DnaK; ATP binding to DnaK triggers the release of the substrate protein, thus completing the reaction cycle. Several rounds of ATP-dependent interactions between DnaJ, DnaK and GrpE are required for fully efficient folding.</text>
</comment>
<comment type="subunit">
    <text evidence="1">Homodimer.</text>
</comment>
<comment type="subcellular location">
    <subcellularLocation>
        <location evidence="1">Cytoplasm</location>
    </subcellularLocation>
</comment>
<comment type="similarity">
    <text evidence="1">Belongs to the GrpE family.</text>
</comment>
<feature type="chain" id="PRO_1000137589" description="Protein GrpE">
    <location>
        <begin position="1"/>
        <end position="210"/>
    </location>
</feature>
<feature type="region of interest" description="Disordered" evidence="2">
    <location>
        <begin position="1"/>
        <end position="42"/>
    </location>
</feature>
<protein>
    <recommendedName>
        <fullName evidence="1">Protein GrpE</fullName>
    </recommendedName>
    <alternativeName>
        <fullName evidence="1">HSP-70 cofactor</fullName>
    </alternativeName>
</protein>
<accession>Q3J7D7</accession>
<name>GRPE_NITOC</name>
<organism>
    <name type="scientific">Nitrosococcus oceani (strain ATCC 19707 / BCRC 17464 / JCM 30415 / NCIMB 11848 / C-107)</name>
    <dbReference type="NCBI Taxonomy" id="323261"/>
    <lineage>
        <taxon>Bacteria</taxon>
        <taxon>Pseudomonadati</taxon>
        <taxon>Pseudomonadota</taxon>
        <taxon>Gammaproteobacteria</taxon>
        <taxon>Chromatiales</taxon>
        <taxon>Chromatiaceae</taxon>
        <taxon>Nitrosococcus</taxon>
    </lineage>
</organism>
<evidence type="ECO:0000255" key="1">
    <source>
        <dbReference type="HAMAP-Rule" id="MF_01151"/>
    </source>
</evidence>
<evidence type="ECO:0000256" key="2">
    <source>
        <dbReference type="SAM" id="MobiDB-lite"/>
    </source>
</evidence>
<keyword id="KW-0143">Chaperone</keyword>
<keyword id="KW-0963">Cytoplasm</keyword>
<keyword id="KW-1185">Reference proteome</keyword>
<keyword id="KW-0346">Stress response</keyword>
<reference key="1">
    <citation type="journal article" date="2006" name="Appl. Environ. Microbiol.">
        <title>Complete genome sequence of the marine, chemolithoautotrophic, ammonia-oxidizing bacterium Nitrosococcus oceani ATCC 19707.</title>
        <authorList>
            <person name="Klotz M.G."/>
            <person name="Arp D.J."/>
            <person name="Chain P.S.G."/>
            <person name="El-Sheikh A.F."/>
            <person name="Hauser L.J."/>
            <person name="Hommes N.G."/>
            <person name="Larimer F.W."/>
            <person name="Malfatti S.A."/>
            <person name="Norton J.M."/>
            <person name="Poret-Peterson A.T."/>
            <person name="Vergez L.M."/>
            <person name="Ward B.B."/>
        </authorList>
    </citation>
    <scope>NUCLEOTIDE SEQUENCE [LARGE SCALE GENOMIC DNA]</scope>
    <source>
        <strain>ATCC 19707 / BCRC 17464 / JCM 30415 / NCIMB 11848 / C-107</strain>
    </source>
</reference>
<gene>
    <name evidence="1" type="primary">grpE</name>
    <name type="ordered locus">Noc_2812</name>
</gene>
<proteinExistence type="inferred from homology"/>